<comment type="function">
    <text evidence="5">This is a key enzyme of plant metabolism catalyzing the first reaction in the biosynthesis from L-phenylalanine of a wide variety of natural products based on the phenylpropane skeleton.</text>
</comment>
<comment type="catalytic activity">
    <reaction evidence="5">
        <text>L-phenylalanine = (E)-cinnamate + NH4(+)</text>
        <dbReference type="Rhea" id="RHEA:21384"/>
        <dbReference type="ChEBI" id="CHEBI:15669"/>
        <dbReference type="ChEBI" id="CHEBI:28938"/>
        <dbReference type="ChEBI" id="CHEBI:58095"/>
        <dbReference type="EC" id="4.3.1.24"/>
    </reaction>
</comment>
<comment type="biophysicochemical properties">
    <kinetics>
        <KM evidence="5">68 uM for L-phenylalanine</KM>
        <Vmax evidence="5">5.5 umol/sec/mg enzyme</Vmax>
    </kinetics>
    <phDependence>
        <text evidence="5">Optimum pH is 8.4-9.2.</text>
    </phDependence>
    <temperatureDependence>
        <text evidence="5">Optimum temperature is 46-48 degrees Celsius.</text>
    </temperatureDependence>
</comment>
<comment type="pathway">
    <text evidence="6">Phenylpropanoid metabolism; trans-cinnamate biosynthesis; trans-cinnamate from L-phenylalanine: step 1/1.</text>
</comment>
<comment type="subunit">
    <text evidence="2">Homotetramer.</text>
</comment>
<comment type="subcellular location">
    <subcellularLocation>
        <location evidence="6">Cytoplasm</location>
    </subcellularLocation>
</comment>
<comment type="PTM">
    <text evidence="3">Contains an active site 4-methylidene-imidazol-5-one (MIO), which is formed autocatalytically by cyclization and dehydration of residues Ala-Ser-Gly.</text>
</comment>
<comment type="similarity">
    <text evidence="6">Belongs to the PAL/histidase family.</text>
</comment>
<protein>
    <recommendedName>
        <fullName>Phenylalanine ammonia-lyase 1</fullName>
        <ecNumber evidence="5">4.3.1.24</ecNumber>
    </recommendedName>
</protein>
<proteinExistence type="evidence at protein level"/>
<sequence length="725" mass="78726">MEINGAHKSNGGGVDAMLCGGDIKTKNMVINAEDPLNWGAAAEQMKGSHLDEVKRMVAEFRKPVVNLGGETLTIGQVAAISTIGNSVKVELSETARAGVNASSDWVMESMNKGTDSYGVTTGFGATSHRRTKNGVALQKELIRFLNAGIFGSTKETSHTLPHSATRAAMLVRINTLLQGFSGIRFEILEAITSFLNNNITPSLPLRGTITASGDLVPLSYIAGLLTGRPNSKATGPNGEALTAEEAFKLAGISSGFFDLQPKEGLALVNGTAVGSGMASMVLFETNVLSVLAEILSAVFAEVMSGKPEFTDHLTHRLKHHPGQIEAAAIMEHILDGSSYMKLAQKLHEMDPLQKPKQDRYALRTSPQWLGPQIEVIRYATKSIEREINSVNDNPLIDVSRNKAIHGGNFQGTPIGVSMDNTRLAIAAIGKLMFAQFSELVNDFYNNGLPSNLTASRNPSLDYGFKGAEIAMASYCSELQYLANPVTSHVQSAEQHNQDVNSLGLISSRKTSEAVDILKLMSTTFLVAICQAVDLRHLEENLRQTVKNTVSQVAKKVLTTGVNGELHPSRFCEKDLLKVVDREQVYTYADDPCSATYPLIQKLRQVIVDHALINGESEKNAVTSIFHKIGAFEEELKAVLPKEVEAARAAYDNGTSAIPNRIKECRSYPLYRFVREELGTELLTGEKVTSPGEEFDKVFTAICEGKIIDPMMECLNEWNGAPIPIC</sequence>
<name>PAL1_ARATH</name>
<reference key="1">
    <citation type="journal article" date="1995" name="Plant Mol. Biol.">
        <title>The phenylalanine ammonia-lyase gene family in Arabidopsis thaliana.</title>
        <authorList>
            <person name="Wanner L.A."/>
            <person name="Li G."/>
            <person name="Ware D."/>
            <person name="Somssich I.E."/>
            <person name="Davis K.R."/>
        </authorList>
    </citation>
    <scope>NUCLEOTIDE SEQUENCE [GENOMIC DNA]</scope>
    <source>
        <strain>cv. Landsberg erecta</strain>
    </source>
</reference>
<reference key="2">
    <citation type="journal article" date="2004" name="Phytochemistry">
        <title>The Arabidopsis phenylalanine ammonia lyase gene family: kinetic characterization of the four PAL isoforms.</title>
        <authorList>
            <person name="Cochrane F.C."/>
            <person name="Davin L.B."/>
            <person name="Lewis N.G."/>
        </authorList>
    </citation>
    <scope>NUCLEOTIDE SEQUENCE [MRNA]</scope>
    <scope>FUNCTION</scope>
    <scope>CATALYTIC ACTIVITY</scope>
    <scope>BIOPHYSICOCHEMICAL PROPERTIES</scope>
    <source>
        <strain>cv. Columbia</strain>
    </source>
</reference>
<reference key="3">
    <citation type="journal article" date="1999" name="Nature">
        <title>Sequence and analysis of chromosome 2 of the plant Arabidopsis thaliana.</title>
        <authorList>
            <person name="Lin X."/>
            <person name="Kaul S."/>
            <person name="Rounsley S.D."/>
            <person name="Shea T.P."/>
            <person name="Benito M.-I."/>
            <person name="Town C.D."/>
            <person name="Fujii C.Y."/>
            <person name="Mason T.M."/>
            <person name="Bowman C.L."/>
            <person name="Barnstead M.E."/>
            <person name="Feldblyum T.V."/>
            <person name="Buell C.R."/>
            <person name="Ketchum K.A."/>
            <person name="Lee J.J."/>
            <person name="Ronning C.M."/>
            <person name="Koo H.L."/>
            <person name="Moffat K.S."/>
            <person name="Cronin L.A."/>
            <person name="Shen M."/>
            <person name="Pai G."/>
            <person name="Van Aken S."/>
            <person name="Umayam L."/>
            <person name="Tallon L.J."/>
            <person name="Gill J.E."/>
            <person name="Adams M.D."/>
            <person name="Carrera A.J."/>
            <person name="Creasy T.H."/>
            <person name="Goodman H.M."/>
            <person name="Somerville C.R."/>
            <person name="Copenhaver G.P."/>
            <person name="Preuss D."/>
            <person name="Nierman W.C."/>
            <person name="White O."/>
            <person name="Eisen J.A."/>
            <person name="Salzberg S.L."/>
            <person name="Fraser C.M."/>
            <person name="Venter J.C."/>
        </authorList>
    </citation>
    <scope>NUCLEOTIDE SEQUENCE [LARGE SCALE GENOMIC DNA]</scope>
    <source>
        <strain>cv. Columbia</strain>
    </source>
</reference>
<reference key="4">
    <citation type="journal article" date="2017" name="Plant J.">
        <title>Araport11: a complete reannotation of the Arabidopsis thaliana reference genome.</title>
        <authorList>
            <person name="Cheng C.Y."/>
            <person name="Krishnakumar V."/>
            <person name="Chan A.P."/>
            <person name="Thibaud-Nissen F."/>
            <person name="Schobel S."/>
            <person name="Town C.D."/>
        </authorList>
    </citation>
    <scope>GENOME REANNOTATION</scope>
    <source>
        <strain>cv. Columbia</strain>
    </source>
</reference>
<reference key="5">
    <citation type="journal article" date="2003" name="Science">
        <title>Empirical analysis of transcriptional activity in the Arabidopsis genome.</title>
        <authorList>
            <person name="Yamada K."/>
            <person name="Lim J."/>
            <person name="Dale J.M."/>
            <person name="Chen H."/>
            <person name="Shinn P."/>
            <person name="Palm C.J."/>
            <person name="Southwick A.M."/>
            <person name="Wu H.C."/>
            <person name="Kim C.J."/>
            <person name="Nguyen M."/>
            <person name="Pham P.K."/>
            <person name="Cheuk R.F."/>
            <person name="Karlin-Newmann G."/>
            <person name="Liu S.X."/>
            <person name="Lam B."/>
            <person name="Sakano H."/>
            <person name="Wu T."/>
            <person name="Yu G."/>
            <person name="Miranda M."/>
            <person name="Quach H.L."/>
            <person name="Tripp M."/>
            <person name="Chang C.H."/>
            <person name="Lee J.M."/>
            <person name="Toriumi M.J."/>
            <person name="Chan M.M."/>
            <person name="Tang C.C."/>
            <person name="Onodera C.S."/>
            <person name="Deng J.M."/>
            <person name="Akiyama K."/>
            <person name="Ansari Y."/>
            <person name="Arakawa T."/>
            <person name="Banh J."/>
            <person name="Banno F."/>
            <person name="Bowser L."/>
            <person name="Brooks S.Y."/>
            <person name="Carninci P."/>
            <person name="Chao Q."/>
            <person name="Choy N."/>
            <person name="Enju A."/>
            <person name="Goldsmith A.D."/>
            <person name="Gurjal M."/>
            <person name="Hansen N.F."/>
            <person name="Hayashizaki Y."/>
            <person name="Johnson-Hopson C."/>
            <person name="Hsuan V.W."/>
            <person name="Iida K."/>
            <person name="Karnes M."/>
            <person name="Khan S."/>
            <person name="Koesema E."/>
            <person name="Ishida J."/>
            <person name="Jiang P.X."/>
            <person name="Jones T."/>
            <person name="Kawai J."/>
            <person name="Kamiya A."/>
            <person name="Meyers C."/>
            <person name="Nakajima M."/>
            <person name="Narusaka M."/>
            <person name="Seki M."/>
            <person name="Sakurai T."/>
            <person name="Satou M."/>
            <person name="Tamse R."/>
            <person name="Vaysberg M."/>
            <person name="Wallender E.K."/>
            <person name="Wong C."/>
            <person name="Yamamura Y."/>
            <person name="Yuan S."/>
            <person name="Shinozaki K."/>
            <person name="Davis R.W."/>
            <person name="Theologis A."/>
            <person name="Ecker J.R."/>
        </authorList>
    </citation>
    <scope>NUCLEOTIDE SEQUENCE [LARGE SCALE MRNA]</scope>
    <source>
        <strain>cv. Columbia</strain>
    </source>
</reference>
<reference key="6">
    <citation type="journal article" date="1990" name="Plant Cell">
        <title>Functional properties of a phenylalanine ammonia-lyase promoter from Arabidopsis.</title>
        <authorList>
            <person name="Ohl S."/>
            <person name="Hedrick S.A."/>
            <person name="Chory J."/>
            <person name="Lamb C.J."/>
        </authorList>
    </citation>
    <scope>NUCLEOTIDE SEQUENCE OF 1-240</scope>
    <source>
        <strain>cv. Columbia</strain>
    </source>
</reference>
<reference key="7">
    <citation type="journal article" date="2013" name="Plant Physiol. Biochem.">
        <title>The flavonoid biosynthetic pathway in Arabidopsis: Structural and genetic diversity.</title>
        <authorList>
            <person name="Saito K."/>
            <person name="Yonekura-Sakakibara K."/>
            <person name="Nakabayashi R."/>
            <person name="Higashi Y."/>
            <person name="Yamazaki M."/>
            <person name="Tohge T."/>
            <person name="Fernie A.R."/>
        </authorList>
    </citation>
    <scope>REVIEW</scope>
    <scope>NOMENCLATURE</scope>
</reference>
<dbReference type="EC" id="4.3.1.24" evidence="5"/>
<dbReference type="EMBL" id="L33677">
    <property type="protein sequence ID" value="AAC18870.1"/>
    <property type="molecule type" value="Genomic_DNA"/>
</dbReference>
<dbReference type="EMBL" id="AY303128">
    <property type="protein sequence ID" value="AAP59438.1"/>
    <property type="molecule type" value="mRNA"/>
</dbReference>
<dbReference type="EMBL" id="AC006922">
    <property type="protein sequence ID" value="AAM15324.1"/>
    <property type="molecule type" value="Genomic_DNA"/>
</dbReference>
<dbReference type="EMBL" id="CP002685">
    <property type="protein sequence ID" value="AEC09341.1"/>
    <property type="molecule type" value="Genomic_DNA"/>
</dbReference>
<dbReference type="EMBL" id="AY045919">
    <property type="protein sequence ID" value="AAK76593.1"/>
    <property type="molecule type" value="mRNA"/>
</dbReference>
<dbReference type="EMBL" id="AY079363">
    <property type="protein sequence ID" value="AAL85094.1"/>
    <property type="molecule type" value="mRNA"/>
</dbReference>
<dbReference type="EMBL" id="BT003330">
    <property type="protein sequence ID" value="AAO29949.1"/>
    <property type="molecule type" value="mRNA"/>
</dbReference>
<dbReference type="EMBL" id="X62747">
    <property type="protein sequence ID" value="CAA44609.1"/>
    <property type="molecule type" value="Genomic_DNA"/>
</dbReference>
<dbReference type="PIR" id="G84787">
    <property type="entry name" value="G84787"/>
</dbReference>
<dbReference type="PIR" id="S52990">
    <property type="entry name" value="S52990"/>
</dbReference>
<dbReference type="RefSeq" id="NP_181241.1">
    <property type="nucleotide sequence ID" value="NM_129260.3"/>
</dbReference>
<dbReference type="SMR" id="P35510"/>
<dbReference type="BioGRID" id="3624">
    <property type="interactions" value="10"/>
</dbReference>
<dbReference type="FunCoup" id="P35510">
    <property type="interactions" value="277"/>
</dbReference>
<dbReference type="IntAct" id="P35510">
    <property type="interactions" value="10"/>
</dbReference>
<dbReference type="STRING" id="3702.P35510"/>
<dbReference type="iPTMnet" id="P35510"/>
<dbReference type="PaxDb" id="3702-AT2G37040.1"/>
<dbReference type="ProteomicsDB" id="248746"/>
<dbReference type="EnsemblPlants" id="AT2G37040.1">
    <property type="protein sequence ID" value="AT2G37040.1"/>
    <property type="gene ID" value="AT2G37040"/>
</dbReference>
<dbReference type="GeneID" id="818280"/>
<dbReference type="Gramene" id="AT2G37040.1">
    <property type="protein sequence ID" value="AT2G37040.1"/>
    <property type="gene ID" value="AT2G37040"/>
</dbReference>
<dbReference type="KEGG" id="ath:AT2G37040"/>
<dbReference type="Araport" id="AT2G37040"/>
<dbReference type="TAIR" id="AT2G37040">
    <property type="gene designation" value="PAL1"/>
</dbReference>
<dbReference type="eggNOG" id="KOG0222">
    <property type="taxonomic scope" value="Eukaryota"/>
</dbReference>
<dbReference type="HOGENOM" id="CLU_014801_3_0_1"/>
<dbReference type="InParanoid" id="P35510"/>
<dbReference type="OMA" id="YSLRCMP"/>
<dbReference type="OrthoDB" id="10051290at2759"/>
<dbReference type="PhylomeDB" id="P35510"/>
<dbReference type="BRENDA" id="4.3.1.24">
    <property type="organism ID" value="399"/>
</dbReference>
<dbReference type="SABIO-RK" id="P35510"/>
<dbReference type="UniPathway" id="UPA00713">
    <property type="reaction ID" value="UER00725"/>
</dbReference>
<dbReference type="PRO" id="PR:P35510"/>
<dbReference type="Proteomes" id="UP000006548">
    <property type="component" value="Chromosome 2"/>
</dbReference>
<dbReference type="ExpressionAtlas" id="P35510">
    <property type="expression patterns" value="baseline and differential"/>
</dbReference>
<dbReference type="GO" id="GO:0005737">
    <property type="term" value="C:cytoplasm"/>
    <property type="evidence" value="ECO:0007669"/>
    <property type="project" value="UniProtKB-SubCell"/>
</dbReference>
<dbReference type="GO" id="GO:0045548">
    <property type="term" value="F:phenylalanine ammonia-lyase activity"/>
    <property type="evidence" value="ECO:0000314"/>
    <property type="project" value="TAIR"/>
</dbReference>
<dbReference type="GO" id="GO:0009800">
    <property type="term" value="P:cinnamic acid biosynthetic process"/>
    <property type="evidence" value="ECO:0007669"/>
    <property type="project" value="UniProtKB-UniPathway"/>
</dbReference>
<dbReference type="GO" id="GO:0006952">
    <property type="term" value="P:defense response"/>
    <property type="evidence" value="ECO:0000270"/>
    <property type="project" value="TAIR"/>
</dbReference>
<dbReference type="GO" id="GO:0009819">
    <property type="term" value="P:drought recovery"/>
    <property type="evidence" value="ECO:0000315"/>
    <property type="project" value="TAIR"/>
</dbReference>
<dbReference type="GO" id="GO:0006559">
    <property type="term" value="P:L-phenylalanine catabolic process"/>
    <property type="evidence" value="ECO:0007669"/>
    <property type="project" value="UniProtKB-KW"/>
</dbReference>
<dbReference type="GO" id="GO:0046274">
    <property type="term" value="P:lignin catabolic process"/>
    <property type="evidence" value="ECO:0000315"/>
    <property type="project" value="TAIR"/>
</dbReference>
<dbReference type="GO" id="GO:0009555">
    <property type="term" value="P:pollen development"/>
    <property type="evidence" value="ECO:0000315"/>
    <property type="project" value="TAIR"/>
</dbReference>
<dbReference type="GO" id="GO:0006979">
    <property type="term" value="P:response to oxidative stress"/>
    <property type="evidence" value="ECO:0000270"/>
    <property type="project" value="TAIR"/>
</dbReference>
<dbReference type="GO" id="GO:0010224">
    <property type="term" value="P:response to UV-B"/>
    <property type="evidence" value="ECO:0000315"/>
    <property type="project" value="TAIR"/>
</dbReference>
<dbReference type="GO" id="GO:0046244">
    <property type="term" value="P:salicylic acid catabolic process"/>
    <property type="evidence" value="ECO:0000315"/>
    <property type="project" value="TAIR"/>
</dbReference>
<dbReference type="CDD" id="cd00332">
    <property type="entry name" value="PAL-HAL"/>
    <property type="match status" value="1"/>
</dbReference>
<dbReference type="FunFam" id="1.10.274.20:FF:000001">
    <property type="entry name" value="Phenylalanine ammonia-lyase"/>
    <property type="match status" value="1"/>
</dbReference>
<dbReference type="FunFam" id="1.10.275.10:FF:000009">
    <property type="entry name" value="Phenylalanine ammonia-lyase"/>
    <property type="match status" value="1"/>
</dbReference>
<dbReference type="FunFam" id="1.20.200.10:FF:000009">
    <property type="entry name" value="Phenylalanine ammonia-lyase"/>
    <property type="match status" value="1"/>
</dbReference>
<dbReference type="Gene3D" id="1.20.200.10">
    <property type="entry name" value="Fumarase/aspartase (Central domain)"/>
    <property type="match status" value="1"/>
</dbReference>
<dbReference type="Gene3D" id="1.10.275.10">
    <property type="entry name" value="Fumarase/aspartase (N-terminal domain)"/>
    <property type="match status" value="1"/>
</dbReference>
<dbReference type="Gene3D" id="1.10.274.20">
    <property type="entry name" value="Phenylalanine ammonia-lyase 1, domain 3"/>
    <property type="match status" value="1"/>
</dbReference>
<dbReference type="InterPro" id="IPR001106">
    <property type="entry name" value="Aromatic_Lyase"/>
</dbReference>
<dbReference type="InterPro" id="IPR024083">
    <property type="entry name" value="Fumarase/histidase_N"/>
</dbReference>
<dbReference type="InterPro" id="IPR008948">
    <property type="entry name" value="L-Aspartase-like"/>
</dbReference>
<dbReference type="InterPro" id="IPR022313">
    <property type="entry name" value="Phe/His_NH3-lyase_AS"/>
</dbReference>
<dbReference type="InterPro" id="IPR005922">
    <property type="entry name" value="Phe_NH3-lyase"/>
</dbReference>
<dbReference type="InterPro" id="IPR023144">
    <property type="entry name" value="Phe_NH3-lyase_shielding_dom_sf"/>
</dbReference>
<dbReference type="NCBIfam" id="TIGR01226">
    <property type="entry name" value="phe_am_lyase"/>
    <property type="match status" value="1"/>
</dbReference>
<dbReference type="PANTHER" id="PTHR10362">
    <property type="entry name" value="HISTIDINE AMMONIA-LYASE"/>
    <property type="match status" value="1"/>
</dbReference>
<dbReference type="Pfam" id="PF00221">
    <property type="entry name" value="Lyase_aromatic"/>
    <property type="match status" value="1"/>
</dbReference>
<dbReference type="SUPFAM" id="SSF48557">
    <property type="entry name" value="L-aspartase-like"/>
    <property type="match status" value="1"/>
</dbReference>
<dbReference type="PROSITE" id="PS00488">
    <property type="entry name" value="PAL_HISTIDASE"/>
    <property type="match status" value="1"/>
</dbReference>
<organism>
    <name type="scientific">Arabidopsis thaliana</name>
    <name type="common">Mouse-ear cress</name>
    <dbReference type="NCBI Taxonomy" id="3702"/>
    <lineage>
        <taxon>Eukaryota</taxon>
        <taxon>Viridiplantae</taxon>
        <taxon>Streptophyta</taxon>
        <taxon>Embryophyta</taxon>
        <taxon>Tracheophyta</taxon>
        <taxon>Spermatophyta</taxon>
        <taxon>Magnoliopsida</taxon>
        <taxon>eudicotyledons</taxon>
        <taxon>Gunneridae</taxon>
        <taxon>Pentapetalae</taxon>
        <taxon>rosids</taxon>
        <taxon>malvids</taxon>
        <taxon>Brassicales</taxon>
        <taxon>Brassicaceae</taxon>
        <taxon>Camelineae</taxon>
        <taxon>Arabidopsis</taxon>
    </lineage>
</organism>
<gene>
    <name type="primary">PAL1</name>
    <name type="ordered locus">At2g37040</name>
    <name type="ORF">T1J8.22</name>
</gene>
<evidence type="ECO:0000250" key="1">
    <source>
        <dbReference type="UniProtKB" id="P11544"/>
    </source>
</evidence>
<evidence type="ECO:0000250" key="2">
    <source>
        <dbReference type="UniProtKB" id="P24481"/>
    </source>
</evidence>
<evidence type="ECO:0000250" key="3">
    <source>
        <dbReference type="UniProtKB" id="Q68G84"/>
    </source>
</evidence>
<evidence type="ECO:0000255" key="4">
    <source>
        <dbReference type="PROSITE-ProRule" id="PRU10122"/>
    </source>
</evidence>
<evidence type="ECO:0000269" key="5">
    <source>
    </source>
</evidence>
<evidence type="ECO:0000305" key="6"/>
<keyword id="KW-0963">Cytoplasm</keyword>
<keyword id="KW-0456">Lyase</keyword>
<keyword id="KW-0585">Phenylalanine catabolism</keyword>
<keyword id="KW-0587">Phenylpropanoid metabolism</keyword>
<keyword id="KW-1185">Reference proteome</keyword>
<feature type="chain" id="PRO_0000215382" description="Phenylalanine ammonia-lyase 1">
    <location>
        <begin position="1"/>
        <end position="725"/>
    </location>
</feature>
<feature type="active site" description="Proton donor/acceptor" evidence="3">
    <location>
        <position position="117"/>
    </location>
</feature>
<feature type="binding site" evidence="3">
    <location>
        <position position="269"/>
    </location>
    <ligand>
        <name>(E)-cinnamate</name>
        <dbReference type="ChEBI" id="CHEBI:15669"/>
    </ligand>
</feature>
<feature type="binding site" evidence="3">
    <location>
        <position position="357"/>
    </location>
    <ligand>
        <name>(E)-cinnamate</name>
        <dbReference type="ChEBI" id="CHEBI:15669"/>
    </ligand>
</feature>
<feature type="binding site" evidence="3">
    <location>
        <position position="363"/>
    </location>
    <ligand>
        <name>(E)-cinnamate</name>
        <dbReference type="ChEBI" id="CHEBI:15669"/>
    </ligand>
</feature>
<feature type="binding site" evidence="3">
    <location>
        <position position="393"/>
    </location>
    <ligand>
        <name>(E)-cinnamate</name>
        <dbReference type="ChEBI" id="CHEBI:15669"/>
    </ligand>
</feature>
<feature type="binding site" evidence="1">
    <location>
        <position position="465"/>
    </location>
    <ligand>
        <name>(E)-cinnamate</name>
        <dbReference type="ChEBI" id="CHEBI:15669"/>
    </ligand>
</feature>
<feature type="binding site" evidence="1">
    <location>
        <position position="493"/>
    </location>
    <ligand>
        <name>(E)-cinnamate</name>
        <dbReference type="ChEBI" id="CHEBI:15669"/>
    </ligand>
</feature>
<feature type="binding site" evidence="3">
    <location>
        <position position="496"/>
    </location>
    <ligand>
        <name>(E)-cinnamate</name>
        <dbReference type="ChEBI" id="CHEBI:15669"/>
    </ligand>
</feature>
<feature type="modified residue" description="2,3-didehydroalanine (Ser)" evidence="4">
    <location>
        <position position="212"/>
    </location>
</feature>
<feature type="cross-link" description="5-imidazolinone (Ala-Gly)" evidence="3">
    <location>
        <begin position="211"/>
        <end position="213"/>
    </location>
</feature>
<feature type="sequence conflict" description="In Ref. 1; AAC18870." evidence="6" ref="1">
    <original>I</original>
    <variation>V</variation>
    <location>
        <position position="329"/>
    </location>
</feature>
<feature type="sequence conflict" description="In Ref. 1; AAC18870." evidence="6" ref="1">
    <original>A</original>
    <variation>R</variation>
    <location>
        <position position="426"/>
    </location>
</feature>
<feature type="sequence conflict" description="In Ref. 1; AAC18870." evidence="6" ref="1">
    <original>I</original>
    <variation>V</variation>
    <location>
        <position position="612"/>
    </location>
</feature>
<accession>P35510</accession>
<accession>Q94AN1</accession>
<accession>Q9ZQD6</accession>